<sequence length="473" mass="51792">MKTLYSLRRFYPVETLFNGTLALAGRDQETTGFAWWAGNARLINLSGKLLGAHVAHAGLIVFWAGAMNLFEVAHFVPEKPMYEQGLILLPHLATLGWGVGPGGEVIDTFPYFVSGVLHLISSAVLGFGGIYHALLGPETLEESFPFFGYVWKDRNKMTTILGIHLILLGIGAFLLVLKALYFGGVYDTWAPGGGDVRKITNLTLSPGVIFGYLLKSPFGGEGWIVSVDDLEDIIGGHVWLGSICILGGIWHILTKPFAWARRAFVWSGEAYLSYSLGALSVFGFIACCFVWFNNTAYPSEFYGPTGPEASQAQAFTFLVRDQRLGANVGSAQGPTGLGKYLMRSPTGEVIFGGETMRFWDLRAPWLEPLRGPNGLDLSRLKKDIQPWQERRSAEYMTHAPLGSLNSVGGVATEINAVNYVSPRSWLATSHFVLGFFLFVGHLWHAGRARAAAAGFEKGIDRDFEPVLSMTPLN</sequence>
<accession>Q7YJX6</accession>
<reference key="1">
    <citation type="journal article" date="2003" name="Plant Syst. Evol.">
        <title>The chloroplast genome of the 'basal' angiosperm Calycanthus fertilis -- structural and phylogenetic analyses.</title>
        <authorList>
            <person name="Goremykin V.V."/>
            <person name="Hirsch-Ernst K.I."/>
            <person name="Woelfl S."/>
            <person name="Hellwig F.H."/>
        </authorList>
    </citation>
    <scope>NUCLEOTIDE SEQUENCE [LARGE SCALE GENOMIC DNA]</scope>
</reference>
<protein>
    <recommendedName>
        <fullName evidence="1">Photosystem II CP43 reaction center protein</fullName>
    </recommendedName>
    <alternativeName>
        <fullName evidence="1">PSII 43 kDa protein</fullName>
    </alternativeName>
    <alternativeName>
        <fullName evidence="1">Protein CP-43</fullName>
    </alternativeName>
</protein>
<name>PSBC_CALFG</name>
<dbReference type="EMBL" id="AJ428413">
    <property type="protein sequence ID" value="CAD28717.1"/>
    <property type="molecule type" value="Genomic_DNA"/>
</dbReference>
<dbReference type="RefSeq" id="NP_862750.1">
    <property type="nucleotide sequence ID" value="NC_004993.1"/>
</dbReference>
<dbReference type="SMR" id="Q7YJX6"/>
<dbReference type="GeneID" id="2598007"/>
<dbReference type="GO" id="GO:0009535">
    <property type="term" value="C:chloroplast thylakoid membrane"/>
    <property type="evidence" value="ECO:0007669"/>
    <property type="project" value="UniProtKB-SubCell"/>
</dbReference>
<dbReference type="GO" id="GO:0009523">
    <property type="term" value="C:photosystem II"/>
    <property type="evidence" value="ECO:0007669"/>
    <property type="project" value="UniProtKB-KW"/>
</dbReference>
<dbReference type="GO" id="GO:0016168">
    <property type="term" value="F:chlorophyll binding"/>
    <property type="evidence" value="ECO:0007669"/>
    <property type="project" value="UniProtKB-UniRule"/>
</dbReference>
<dbReference type="GO" id="GO:0045156">
    <property type="term" value="F:electron transporter, transferring electrons within the cyclic electron transport pathway of photosynthesis activity"/>
    <property type="evidence" value="ECO:0007669"/>
    <property type="project" value="InterPro"/>
</dbReference>
<dbReference type="GO" id="GO:0046872">
    <property type="term" value="F:metal ion binding"/>
    <property type="evidence" value="ECO:0007669"/>
    <property type="project" value="UniProtKB-KW"/>
</dbReference>
<dbReference type="GO" id="GO:0009772">
    <property type="term" value="P:photosynthetic electron transport in photosystem II"/>
    <property type="evidence" value="ECO:0007669"/>
    <property type="project" value="InterPro"/>
</dbReference>
<dbReference type="FunFam" id="1.10.10.670:FF:000001">
    <property type="entry name" value="Photosystem II CP43 reaction center protein"/>
    <property type="match status" value="1"/>
</dbReference>
<dbReference type="Gene3D" id="1.10.10.670">
    <property type="entry name" value="photosystem ii from thermosynechococcus elongatus"/>
    <property type="match status" value="1"/>
</dbReference>
<dbReference type="HAMAP" id="MF_01496">
    <property type="entry name" value="PSII_PsbC_CP43"/>
    <property type="match status" value="1"/>
</dbReference>
<dbReference type="InterPro" id="IPR000932">
    <property type="entry name" value="PS_antenna-like"/>
</dbReference>
<dbReference type="InterPro" id="IPR036001">
    <property type="entry name" value="PS_II_antenna-like_sf"/>
</dbReference>
<dbReference type="InterPro" id="IPR005869">
    <property type="entry name" value="PSII_PsbC"/>
</dbReference>
<dbReference type="InterPro" id="IPR044900">
    <property type="entry name" value="PSII_PsbC_sf"/>
</dbReference>
<dbReference type="NCBIfam" id="TIGR01153">
    <property type="entry name" value="psbC"/>
    <property type="match status" value="1"/>
</dbReference>
<dbReference type="Pfam" id="PF00421">
    <property type="entry name" value="PSII"/>
    <property type="match status" value="1"/>
</dbReference>
<dbReference type="SUPFAM" id="SSF161077">
    <property type="entry name" value="Photosystem II antenna protein-like"/>
    <property type="match status" value="1"/>
</dbReference>
<comment type="function">
    <text evidence="1">One of the components of the core complex of photosystem II (PSII). It binds chlorophyll and helps catalyze the primary light-induced photochemical processes of PSII. PSII is a light-driven water:plastoquinone oxidoreductase, using light energy to abstract electrons from H(2)O, generating O(2) and a proton gradient subsequently used for ATP formation.</text>
</comment>
<comment type="cofactor">
    <text evidence="1">Binds multiple chlorophylls and provides some of the ligands for the Ca-4Mn-5O cluster of the oxygen-evolving complex. It may also provide a ligand for a Cl- that is required for oxygen evolution. PSII binds additional chlorophylls, carotenoids and specific lipids.</text>
</comment>
<comment type="subunit">
    <text evidence="1">PSII is composed of 1 copy each of membrane proteins PsbA, PsbB, PsbC, PsbD, PsbE, PsbF, PsbH, PsbI, PsbJ, PsbK, PsbL, PsbM, PsbT, PsbX, PsbY, PsbZ, Psb30/Ycf12, at least 3 peripheral proteins of the oxygen-evolving complex and a large number of cofactors. It forms dimeric complexes.</text>
</comment>
<comment type="subcellular location">
    <subcellularLocation>
        <location evidence="1">Plastid</location>
        <location evidence="1">Chloroplast thylakoid membrane</location>
        <topology evidence="1">Multi-pass membrane protein</topology>
    </subcellularLocation>
</comment>
<comment type="similarity">
    <text evidence="1">Belongs to the PsbB/PsbC family. PsbC subfamily.</text>
</comment>
<geneLocation type="chloroplast"/>
<evidence type="ECO:0000255" key="1">
    <source>
        <dbReference type="HAMAP-Rule" id="MF_01496"/>
    </source>
</evidence>
<gene>
    <name evidence="1" type="primary">psbC</name>
</gene>
<feature type="propeptide" id="PRO_0000431117" evidence="1">
    <location>
        <begin position="1"/>
        <end position="14"/>
    </location>
</feature>
<feature type="chain" id="PRO_0000361331" description="Photosystem II CP43 reaction center protein" evidence="1">
    <location>
        <begin position="15"/>
        <end position="473"/>
    </location>
</feature>
<feature type="transmembrane region" description="Helical" evidence="1">
    <location>
        <begin position="69"/>
        <end position="93"/>
    </location>
</feature>
<feature type="transmembrane region" description="Helical" evidence="1">
    <location>
        <begin position="134"/>
        <end position="155"/>
    </location>
</feature>
<feature type="transmembrane region" description="Helical" evidence="1">
    <location>
        <begin position="178"/>
        <end position="200"/>
    </location>
</feature>
<feature type="transmembrane region" description="Helical" evidence="1">
    <location>
        <begin position="255"/>
        <end position="275"/>
    </location>
</feature>
<feature type="transmembrane region" description="Helical" evidence="1">
    <location>
        <begin position="291"/>
        <end position="312"/>
    </location>
</feature>
<feature type="transmembrane region" description="Helical" evidence="1">
    <location>
        <begin position="447"/>
        <end position="471"/>
    </location>
</feature>
<feature type="binding site" evidence="1">
    <location>
        <position position="367"/>
    </location>
    <ligand>
        <name>[CaMn4O5] cluster</name>
        <dbReference type="ChEBI" id="CHEBI:189552"/>
    </ligand>
</feature>
<feature type="modified residue" description="N-acetylthreonine" evidence="1">
    <location>
        <position position="15"/>
    </location>
</feature>
<feature type="modified residue" description="Phosphothreonine" evidence="1">
    <location>
        <position position="15"/>
    </location>
</feature>
<organism>
    <name type="scientific">Calycanthus floridus var. glaucus</name>
    <name type="common">Eastern sweetshrub</name>
    <name type="synonym">Calycanthus fertilis var. ferax</name>
    <dbReference type="NCBI Taxonomy" id="212734"/>
    <lineage>
        <taxon>Eukaryota</taxon>
        <taxon>Viridiplantae</taxon>
        <taxon>Streptophyta</taxon>
        <taxon>Embryophyta</taxon>
        <taxon>Tracheophyta</taxon>
        <taxon>Spermatophyta</taxon>
        <taxon>Magnoliopsida</taxon>
        <taxon>Magnoliidae</taxon>
        <taxon>Laurales</taxon>
        <taxon>Calycanthaceae</taxon>
        <taxon>Calycanthus</taxon>
    </lineage>
</organism>
<proteinExistence type="inferred from homology"/>
<keyword id="KW-0007">Acetylation</keyword>
<keyword id="KW-0148">Chlorophyll</keyword>
<keyword id="KW-0150">Chloroplast</keyword>
<keyword id="KW-0157">Chromophore</keyword>
<keyword id="KW-0464">Manganese</keyword>
<keyword id="KW-0472">Membrane</keyword>
<keyword id="KW-0479">Metal-binding</keyword>
<keyword id="KW-0597">Phosphoprotein</keyword>
<keyword id="KW-0602">Photosynthesis</keyword>
<keyword id="KW-0604">Photosystem II</keyword>
<keyword id="KW-0934">Plastid</keyword>
<keyword id="KW-0793">Thylakoid</keyword>
<keyword id="KW-0812">Transmembrane</keyword>
<keyword id="KW-1133">Transmembrane helix</keyword>